<organism>
    <name type="scientific">Leptospira biflexa serovar Patoc (strain Patoc 1 / Ames)</name>
    <dbReference type="NCBI Taxonomy" id="355278"/>
    <lineage>
        <taxon>Bacteria</taxon>
        <taxon>Pseudomonadati</taxon>
        <taxon>Spirochaetota</taxon>
        <taxon>Spirochaetia</taxon>
        <taxon>Leptospirales</taxon>
        <taxon>Leptospiraceae</taxon>
        <taxon>Leptospira</taxon>
    </lineage>
</organism>
<name>EFP_LEPBA</name>
<comment type="function">
    <text evidence="1">Involved in peptide bond synthesis. Stimulates efficient translation and peptide-bond synthesis on native or reconstituted 70S ribosomes in vitro. Probably functions indirectly by altering the affinity of the ribosome for aminoacyl-tRNA, thus increasing their reactivity as acceptors for peptidyl transferase.</text>
</comment>
<comment type="pathway">
    <text evidence="1">Protein biosynthesis; polypeptide chain elongation.</text>
</comment>
<comment type="subcellular location">
    <subcellularLocation>
        <location evidence="1">Cytoplasm</location>
    </subcellularLocation>
</comment>
<comment type="similarity">
    <text evidence="1">Belongs to the elongation factor P family.</text>
</comment>
<evidence type="ECO:0000255" key="1">
    <source>
        <dbReference type="HAMAP-Rule" id="MF_00141"/>
    </source>
</evidence>
<proteinExistence type="inferred from homology"/>
<dbReference type="EMBL" id="CP000778">
    <property type="protein sequence ID" value="ABZ96016.1"/>
    <property type="molecule type" value="Genomic_DNA"/>
</dbReference>
<dbReference type="RefSeq" id="WP_012476671.1">
    <property type="nucleotide sequence ID" value="NC_010845.1"/>
</dbReference>
<dbReference type="SMR" id="B0SII2"/>
<dbReference type="KEGG" id="lbf:LBF_4194"/>
<dbReference type="HOGENOM" id="CLU_074944_0_1_12"/>
<dbReference type="UniPathway" id="UPA00345"/>
<dbReference type="GO" id="GO:0005737">
    <property type="term" value="C:cytoplasm"/>
    <property type="evidence" value="ECO:0007669"/>
    <property type="project" value="UniProtKB-SubCell"/>
</dbReference>
<dbReference type="GO" id="GO:0003746">
    <property type="term" value="F:translation elongation factor activity"/>
    <property type="evidence" value="ECO:0007669"/>
    <property type="project" value="UniProtKB-UniRule"/>
</dbReference>
<dbReference type="GO" id="GO:0043043">
    <property type="term" value="P:peptide biosynthetic process"/>
    <property type="evidence" value="ECO:0007669"/>
    <property type="project" value="InterPro"/>
</dbReference>
<dbReference type="CDD" id="cd04470">
    <property type="entry name" value="S1_EF-P_repeat_1"/>
    <property type="match status" value="1"/>
</dbReference>
<dbReference type="CDD" id="cd05794">
    <property type="entry name" value="S1_EF-P_repeat_2"/>
    <property type="match status" value="1"/>
</dbReference>
<dbReference type="FunFam" id="2.30.30.30:FF:000003">
    <property type="entry name" value="Elongation factor P"/>
    <property type="match status" value="1"/>
</dbReference>
<dbReference type="FunFam" id="2.40.50.140:FF:000004">
    <property type="entry name" value="Elongation factor P"/>
    <property type="match status" value="1"/>
</dbReference>
<dbReference type="FunFam" id="2.40.50.140:FF:000009">
    <property type="entry name" value="Elongation factor P"/>
    <property type="match status" value="1"/>
</dbReference>
<dbReference type="Gene3D" id="2.30.30.30">
    <property type="match status" value="1"/>
</dbReference>
<dbReference type="Gene3D" id="2.40.50.140">
    <property type="entry name" value="Nucleic acid-binding proteins"/>
    <property type="match status" value="2"/>
</dbReference>
<dbReference type="HAMAP" id="MF_00141">
    <property type="entry name" value="EF_P"/>
    <property type="match status" value="1"/>
</dbReference>
<dbReference type="InterPro" id="IPR015365">
    <property type="entry name" value="Elong-fact-P_C"/>
</dbReference>
<dbReference type="InterPro" id="IPR012340">
    <property type="entry name" value="NA-bd_OB-fold"/>
</dbReference>
<dbReference type="InterPro" id="IPR014722">
    <property type="entry name" value="Rib_uL2_dom2"/>
</dbReference>
<dbReference type="InterPro" id="IPR020599">
    <property type="entry name" value="Transl_elong_fac_P/YeiP"/>
</dbReference>
<dbReference type="InterPro" id="IPR013185">
    <property type="entry name" value="Transl_elong_KOW-like"/>
</dbReference>
<dbReference type="InterPro" id="IPR001059">
    <property type="entry name" value="Transl_elong_P/YeiP_cen"/>
</dbReference>
<dbReference type="InterPro" id="IPR013852">
    <property type="entry name" value="Transl_elong_P/YeiP_CS"/>
</dbReference>
<dbReference type="InterPro" id="IPR011768">
    <property type="entry name" value="Transl_elongation_fac_P"/>
</dbReference>
<dbReference type="InterPro" id="IPR008991">
    <property type="entry name" value="Translation_prot_SH3-like_sf"/>
</dbReference>
<dbReference type="NCBIfam" id="TIGR00038">
    <property type="entry name" value="efp"/>
    <property type="match status" value="1"/>
</dbReference>
<dbReference type="NCBIfam" id="NF001810">
    <property type="entry name" value="PRK00529.1"/>
    <property type="match status" value="1"/>
</dbReference>
<dbReference type="PANTHER" id="PTHR30053">
    <property type="entry name" value="ELONGATION FACTOR P"/>
    <property type="match status" value="1"/>
</dbReference>
<dbReference type="PANTHER" id="PTHR30053:SF12">
    <property type="entry name" value="ELONGATION FACTOR P (EF-P) FAMILY PROTEIN"/>
    <property type="match status" value="1"/>
</dbReference>
<dbReference type="Pfam" id="PF01132">
    <property type="entry name" value="EFP"/>
    <property type="match status" value="1"/>
</dbReference>
<dbReference type="Pfam" id="PF08207">
    <property type="entry name" value="EFP_N"/>
    <property type="match status" value="1"/>
</dbReference>
<dbReference type="Pfam" id="PF09285">
    <property type="entry name" value="Elong-fact-P_C"/>
    <property type="match status" value="1"/>
</dbReference>
<dbReference type="PIRSF" id="PIRSF005901">
    <property type="entry name" value="EF-P"/>
    <property type="match status" value="1"/>
</dbReference>
<dbReference type="SMART" id="SM01185">
    <property type="entry name" value="EFP"/>
    <property type="match status" value="1"/>
</dbReference>
<dbReference type="SMART" id="SM00841">
    <property type="entry name" value="Elong-fact-P_C"/>
    <property type="match status" value="1"/>
</dbReference>
<dbReference type="SUPFAM" id="SSF50249">
    <property type="entry name" value="Nucleic acid-binding proteins"/>
    <property type="match status" value="2"/>
</dbReference>
<dbReference type="SUPFAM" id="SSF50104">
    <property type="entry name" value="Translation proteins SH3-like domain"/>
    <property type="match status" value="1"/>
</dbReference>
<dbReference type="PROSITE" id="PS01275">
    <property type="entry name" value="EFP"/>
    <property type="match status" value="1"/>
</dbReference>
<accession>B0SII2</accession>
<protein>
    <recommendedName>
        <fullName evidence="1">Elongation factor P</fullName>
        <shortName evidence="1">EF-P</shortName>
    </recommendedName>
</protein>
<reference key="1">
    <citation type="journal article" date="2008" name="PLoS ONE">
        <title>Genome sequence of the saprophyte Leptospira biflexa provides insights into the evolution of Leptospira and the pathogenesis of leptospirosis.</title>
        <authorList>
            <person name="Picardeau M."/>
            <person name="Bulach D.M."/>
            <person name="Bouchier C."/>
            <person name="Zuerner R.L."/>
            <person name="Zidane N."/>
            <person name="Wilson P.J."/>
            <person name="Creno S."/>
            <person name="Kuczek E.S."/>
            <person name="Bommezzadri S."/>
            <person name="Davis J.C."/>
            <person name="McGrath A."/>
            <person name="Johnson M.J."/>
            <person name="Boursaux-Eude C."/>
            <person name="Seemann T."/>
            <person name="Rouy Z."/>
            <person name="Coppel R.L."/>
            <person name="Rood J.I."/>
            <person name="Lajus A."/>
            <person name="Davies J.K."/>
            <person name="Medigue C."/>
            <person name="Adler B."/>
        </authorList>
    </citation>
    <scope>NUCLEOTIDE SEQUENCE [LARGE SCALE GENOMIC DNA]</scope>
    <source>
        <strain>Patoc 1 / Ames</strain>
    </source>
</reference>
<keyword id="KW-0963">Cytoplasm</keyword>
<keyword id="KW-0251">Elongation factor</keyword>
<keyword id="KW-0648">Protein biosynthesis</keyword>
<feature type="chain" id="PRO_1000096169" description="Elongation factor P">
    <location>
        <begin position="1"/>
        <end position="188"/>
    </location>
</feature>
<gene>
    <name evidence="1" type="primary">efp</name>
    <name type="ordered locus">LBF_4194</name>
</gene>
<sequence>MNLGITEVKKGMILKIDNELYSVVKTEFVNPGKGSAFIRTKLKNIVRDSSIERTFKAAEKLESVDLERRKMQYCYADGDQIIFMDVNDYEQIPVSKDYVEDILPFMKEETPVEVAFYNDKPIGVTPPNFAILEVTYAEDGLKGDTTGLALKRVTVETGGEVQVPIFIKQGDTVKIDLRDLSYVERVNK</sequence>